<dbReference type="EMBL" id="AF200716">
    <property type="protein sequence ID" value="AAF19188.1"/>
    <property type="molecule type" value="Genomic_DNA"/>
</dbReference>
<dbReference type="EMBL" id="AE004969">
    <property type="protein sequence ID" value="AAW89606.1"/>
    <property type="molecule type" value="Genomic_DNA"/>
</dbReference>
<dbReference type="RefSeq" id="WP_003688410.1">
    <property type="nucleotide sequence ID" value="NC_002946.2"/>
</dbReference>
<dbReference type="RefSeq" id="YP_208018.1">
    <property type="nucleotide sequence ID" value="NC_002946.2"/>
</dbReference>
<dbReference type="PDB" id="2BSQ">
    <property type="method" value="X-ray"/>
    <property type="resolution" value="3.00 A"/>
    <property type="chains" value="E/F/G/H=2-78"/>
</dbReference>
<dbReference type="PDB" id="2H1C">
    <property type="method" value="X-ray"/>
    <property type="resolution" value="1.80 A"/>
    <property type="chains" value="B=46-64"/>
</dbReference>
<dbReference type="PDB" id="2H1O">
    <property type="method" value="X-ray"/>
    <property type="resolution" value="3.00 A"/>
    <property type="chains" value="E/F/G/H=2-69"/>
</dbReference>
<dbReference type="PDBsum" id="2BSQ"/>
<dbReference type="PDBsum" id="2H1C"/>
<dbReference type="PDBsum" id="2H1O"/>
<dbReference type="SMR" id="Q5F881"/>
<dbReference type="STRING" id="242231.NGO_0908"/>
<dbReference type="GeneID" id="66753237"/>
<dbReference type="KEGG" id="ngo:NGO_0908"/>
<dbReference type="PATRIC" id="fig|242231.10.peg.1068"/>
<dbReference type="HOGENOM" id="CLU_168829_4_0_4"/>
<dbReference type="EvolutionaryTrace" id="Q5F881"/>
<dbReference type="Proteomes" id="UP000000535">
    <property type="component" value="Chromosome"/>
</dbReference>
<dbReference type="GO" id="GO:0042803">
    <property type="term" value="F:protein homodimerization activity"/>
    <property type="evidence" value="ECO:0000314"/>
    <property type="project" value="UniProtKB"/>
</dbReference>
<dbReference type="GO" id="GO:0043565">
    <property type="term" value="F:sequence-specific DNA binding"/>
    <property type="evidence" value="ECO:0000314"/>
    <property type="project" value="UniProtKB"/>
</dbReference>
<dbReference type="GO" id="GO:0044001">
    <property type="term" value="P:migration in host"/>
    <property type="evidence" value="ECO:0000315"/>
    <property type="project" value="UniProtKB"/>
</dbReference>
<dbReference type="GO" id="GO:0006355">
    <property type="term" value="P:regulation of DNA-templated transcription"/>
    <property type="evidence" value="ECO:0007669"/>
    <property type="project" value="InterPro"/>
</dbReference>
<dbReference type="Gene3D" id="1.10.1220.10">
    <property type="entry name" value="Met repressor-like"/>
    <property type="match status" value="1"/>
</dbReference>
<dbReference type="InterPro" id="IPR013321">
    <property type="entry name" value="Arc_rbn_hlx_hlx"/>
</dbReference>
<dbReference type="InterPro" id="IPR053853">
    <property type="entry name" value="FitA-like_RHH"/>
</dbReference>
<dbReference type="InterPro" id="IPR010985">
    <property type="entry name" value="Ribbon_hlx_hlx"/>
</dbReference>
<dbReference type="Pfam" id="PF22513">
    <property type="entry name" value="FitA-like_RHH"/>
    <property type="match status" value="1"/>
</dbReference>
<dbReference type="SUPFAM" id="SSF47598">
    <property type="entry name" value="Ribbon-helix-helix"/>
    <property type="match status" value="1"/>
</dbReference>
<gene>
    <name type="primary">fitA</name>
    <name type="synonym">vapB</name>
    <name type="ordered locus">NGO_0908</name>
</gene>
<feature type="chain" id="PRO_0000408086" description="Antitoxin FitA">
    <location>
        <begin position="1"/>
        <end position="78"/>
    </location>
</feature>
<feature type="mutagenesis site" description="Loss of DNA-binding, still binds FitB." evidence="2">
    <original>R</original>
    <variation>A</variation>
    <location>
        <position position="7"/>
    </location>
</feature>
<feature type="strand" evidence="4">
    <location>
        <begin position="4"/>
        <end position="6"/>
    </location>
</feature>
<feature type="helix" evidence="4">
    <location>
        <begin position="11"/>
        <end position="23"/>
    </location>
</feature>
<feature type="helix" evidence="4">
    <location>
        <begin position="28"/>
        <end position="43"/>
    </location>
</feature>
<feature type="helix" evidence="5">
    <location>
        <begin position="48"/>
        <end position="59"/>
    </location>
</feature>
<reference key="1">
    <citation type="journal article" date="2000" name="Infect. Immun.">
        <title>Isolation of Neisseria gonorrhoeae mutants that show enhanced trafficking across polarized T84 epithelial monolayers.</title>
        <authorList>
            <person name="Hopper S."/>
            <person name="Wilbur J.S."/>
            <person name="Vasquez B.L."/>
            <person name="Larson J."/>
            <person name="Clary S."/>
            <person name="Mehr I.J."/>
            <person name="Seifert H.S."/>
            <person name="So M."/>
        </authorList>
    </citation>
    <scope>NUCLEOTIDE SEQUENCE [GENOMIC DNA]</scope>
    <scope>FUNCTION</scope>
    <scope>DISRUPTION PHENOTYPE</scope>
    <source>
        <strain>ATCC 700825 / FA 1090</strain>
        <strain>MS11A</strain>
    </source>
</reference>
<reference key="2">
    <citation type="submission" date="2003-03" db="EMBL/GenBank/DDBJ databases">
        <title>The complete genome sequence of Neisseria gonorrhoeae.</title>
        <authorList>
            <person name="Lewis L.A."/>
            <person name="Gillaspy A.F."/>
            <person name="McLaughlin R.E."/>
            <person name="Gipson M."/>
            <person name="Ducey T.F."/>
            <person name="Ownbey T."/>
            <person name="Hartman K."/>
            <person name="Nydick C."/>
            <person name="Carson M.B."/>
            <person name="Vaughn J."/>
            <person name="Thomson C."/>
            <person name="Song L."/>
            <person name="Lin S."/>
            <person name="Yuan X."/>
            <person name="Najar F."/>
            <person name="Zhan M."/>
            <person name="Ren Q."/>
            <person name="Zhu H."/>
            <person name="Qi S."/>
            <person name="Kenton S.M."/>
            <person name="Lai H."/>
            <person name="White J.D."/>
            <person name="Clifton S."/>
            <person name="Roe B.A."/>
            <person name="Dyer D.W."/>
        </authorList>
    </citation>
    <scope>NUCLEOTIDE SEQUENCE [LARGE SCALE GENOMIC DNA]</scope>
    <source>
        <strain>ATCC 700825 / FA 1090</strain>
    </source>
</reference>
<reference key="3">
    <citation type="journal article" date="2005" name="Biochemistry">
        <title>Neisseria gonorrhoeae FitA interacts with FitB to bind DNA through its ribbon-helix-helix motif.</title>
        <authorList>
            <person name="Wilbur J.S."/>
            <person name="Chivers P.T."/>
            <person name="Mattison K."/>
            <person name="Potter L."/>
            <person name="Brennan R.G."/>
            <person name="So M."/>
        </authorList>
    </citation>
    <scope>DNA-BINDING</scope>
    <scope>SUBUNIT</scope>
    <scope>MUTAGENESIS OF ARG-7</scope>
    <source>
        <strain>ATCC 700825 / FA 1090</strain>
    </source>
</reference>
<reference key="4">
    <citation type="journal article" date="2006" name="J. Biol. Chem.">
        <title>Structure of FitAB from Neisseria gonorrhoeae bound to DNA reveals a tetramer of toxin-antitoxin heterodimers containing pin domains and ribbon-helix-helix motifs.</title>
        <authorList>
            <person name="Mattison K."/>
            <person name="Wilbur J.S."/>
            <person name="So M."/>
            <person name="Brennan R.G."/>
        </authorList>
    </citation>
    <scope>X-RAY CRYSTALLOGRAPHY (1.80 ANGSTROMS) OF 2-78 IN COMPLEX WITH FITB BOUND TO DNA</scope>
    <scope>SUBUNIT</scope>
    <scope>DNA-BINDING</scope>
    <source>
        <strain>ATCC 700825 / FA 1090</strain>
    </source>
</reference>
<comment type="function">
    <text evidence="1">Antitoxin component of a type II toxin-antitoxin (TA) system. Plays a role in the speed with which bacteria traverse human epithelial cells; disruption of the locus increases the speed of trafficking about 2-4-fold. Binds to its own promoter, binding affinity of the FitAB complex is 20-30-fold higher than FitA alone. No nuclease activity was observed for the FitAB complex, perhaps because FitA (the antitoxin) prevents metal binding and thus catalysis by FitB.</text>
</comment>
<comment type="subunit">
    <text evidence="2 3">Homodimer in the absence of FitB; forms a heterodimer with FitB; 4 FitAB heterodimers form a complex that binds to fitAB promoter DNA. The complex is also seen in solution.</text>
</comment>
<comment type="disruption phenotype">
    <text evidence="1">Disruption of the fitAB operon leads to faster transepithelial cell trafficking of the bacterium; mutants adhere to and invade cells normally. Mutants grow normally in liquid culture but much faster within human cell lines A431 and T84; these latter 2 phenotypes were observed using MS11A bacteria with a disrupted fitAB locus.</text>
</comment>
<protein>
    <recommendedName>
        <fullName>Antitoxin FitA</fullName>
    </recommendedName>
    <alternativeName>
        <fullName>Trafficking protein A</fullName>
    </alternativeName>
</protein>
<evidence type="ECO:0000269" key="1">
    <source>
    </source>
</evidence>
<evidence type="ECO:0000269" key="2">
    <source>
    </source>
</evidence>
<evidence type="ECO:0000269" key="3">
    <source>
    </source>
</evidence>
<evidence type="ECO:0007829" key="4">
    <source>
        <dbReference type="PDB" id="2BSQ"/>
    </source>
</evidence>
<evidence type="ECO:0007829" key="5">
    <source>
        <dbReference type="PDB" id="2H1C"/>
    </source>
</evidence>
<proteinExistence type="evidence at protein level"/>
<organism>
    <name type="scientific">Neisseria gonorrhoeae (strain ATCC 700825 / FA 1090)</name>
    <dbReference type="NCBI Taxonomy" id="242231"/>
    <lineage>
        <taxon>Bacteria</taxon>
        <taxon>Pseudomonadati</taxon>
        <taxon>Pseudomonadota</taxon>
        <taxon>Betaproteobacteria</taxon>
        <taxon>Neisseriales</taxon>
        <taxon>Neisseriaceae</taxon>
        <taxon>Neisseria</taxon>
    </lineage>
</organism>
<accession>Q5F881</accession>
<accession>Q9RF92</accession>
<name>FITA_NEIG1</name>
<sequence>MASVVIRNLSEATHNAIKFRARAAGRSTEAEIRLILDNIAKAQQTVRLGSMLASIGQEIGGVELEDVRGRNTDNEVSL</sequence>
<keyword id="KW-0002">3D-structure</keyword>
<keyword id="KW-0238">DNA-binding</keyword>
<keyword id="KW-1185">Reference proteome</keyword>
<keyword id="KW-1277">Toxin-antitoxin system</keyword>